<name>DTM1_ORYSJ</name>
<proteinExistence type="evidence at transcript level"/>
<organism>
    <name type="scientific">Oryza sativa subsp. japonica</name>
    <name type="common">Rice</name>
    <dbReference type="NCBI Taxonomy" id="39947"/>
    <lineage>
        <taxon>Eukaryota</taxon>
        <taxon>Viridiplantae</taxon>
        <taxon>Streptophyta</taxon>
        <taxon>Embryophyta</taxon>
        <taxon>Tracheophyta</taxon>
        <taxon>Spermatophyta</taxon>
        <taxon>Magnoliopsida</taxon>
        <taxon>Liliopsida</taxon>
        <taxon>Poales</taxon>
        <taxon>Poaceae</taxon>
        <taxon>BOP clade</taxon>
        <taxon>Oryzoideae</taxon>
        <taxon>Oryzeae</taxon>
        <taxon>Oryzinae</taxon>
        <taxon>Oryza</taxon>
        <taxon>Oryza sativa</taxon>
    </lineage>
</organism>
<accession>Q7XI45</accession>
<keyword id="KW-0256">Endoplasmic reticulum</keyword>
<keyword id="KW-0472">Membrane</keyword>
<keyword id="KW-1185">Reference proteome</keyword>
<keyword id="KW-0732">Signal</keyword>
<keyword id="KW-0812">Transmembrane</keyword>
<keyword id="KW-1133">Transmembrane helix</keyword>
<protein>
    <recommendedName>
        <fullName evidence="4">Signal peptidase complex-like protein DTM1</fullName>
    </recommendedName>
    <alternativeName>
        <fullName evidence="3">Protein DEFECTIVE TAPETUM AND MEIOCYTES 1</fullName>
    </alternativeName>
</protein>
<dbReference type="EMBL" id="AP004341">
    <property type="protein sequence ID" value="BAC79906.1"/>
    <property type="molecule type" value="Genomic_DNA"/>
</dbReference>
<dbReference type="EMBL" id="AP008213">
    <property type="protein sequence ID" value="BAF22232.1"/>
    <property type="molecule type" value="Genomic_DNA"/>
</dbReference>
<dbReference type="EMBL" id="AP014963">
    <property type="status" value="NOT_ANNOTATED_CDS"/>
    <property type="molecule type" value="Genomic_DNA"/>
</dbReference>
<dbReference type="EMBL" id="AK059960">
    <property type="protein sequence ID" value="BAG87241.1"/>
    <property type="molecule type" value="mRNA"/>
</dbReference>
<dbReference type="RefSeq" id="XP_015644694.1">
    <property type="nucleotide sequence ID" value="XM_015789208.1"/>
</dbReference>
<dbReference type="SMR" id="Q7XI45"/>
<dbReference type="FunCoup" id="Q7XI45">
    <property type="interactions" value="1120"/>
</dbReference>
<dbReference type="STRING" id="39947.Q7XI45"/>
<dbReference type="PaxDb" id="39947-Q7XI45"/>
<dbReference type="EnsemblPlants" id="Os07t0622900-01">
    <property type="protein sequence ID" value="Os07t0622900-01"/>
    <property type="gene ID" value="Os07g0622900"/>
</dbReference>
<dbReference type="Gramene" id="Os07t0622900-01">
    <property type="protein sequence ID" value="Os07t0622900-01"/>
    <property type="gene ID" value="Os07g0622900"/>
</dbReference>
<dbReference type="KEGG" id="dosa:Os07g0622900"/>
<dbReference type="InParanoid" id="Q7XI45"/>
<dbReference type="OrthoDB" id="1861824at2759"/>
<dbReference type="Proteomes" id="UP000000763">
    <property type="component" value="Chromosome 7"/>
</dbReference>
<dbReference type="Proteomes" id="UP000059680">
    <property type="component" value="Chromosome 7"/>
</dbReference>
<dbReference type="GO" id="GO:0005789">
    <property type="term" value="C:endoplasmic reticulum membrane"/>
    <property type="evidence" value="ECO:0000314"/>
    <property type="project" value="UniProtKB"/>
</dbReference>
<dbReference type="GO" id="GO:0005787">
    <property type="term" value="C:signal peptidase complex"/>
    <property type="evidence" value="ECO:0007669"/>
    <property type="project" value="InterPro"/>
</dbReference>
<dbReference type="GO" id="GO:0048658">
    <property type="term" value="P:anther wall tapetum development"/>
    <property type="evidence" value="ECO:0000315"/>
    <property type="project" value="UniProtKB"/>
</dbReference>
<dbReference type="GO" id="GO:0009555">
    <property type="term" value="P:pollen development"/>
    <property type="evidence" value="ECO:0000315"/>
    <property type="project" value="UniProtKB"/>
</dbReference>
<dbReference type="GO" id="GO:0006465">
    <property type="term" value="P:signal peptide processing"/>
    <property type="evidence" value="ECO:0007669"/>
    <property type="project" value="InterPro"/>
</dbReference>
<dbReference type="InterPro" id="IPR039955">
    <property type="entry name" value="DTM1"/>
</dbReference>
<dbReference type="InterPro" id="IPR009542">
    <property type="entry name" value="Spc1/SPCS1"/>
</dbReference>
<dbReference type="InterPro" id="IPR006311">
    <property type="entry name" value="TAT_signal"/>
</dbReference>
<dbReference type="PANTHER" id="PTHR38354">
    <property type="entry name" value="SIGNAL PEPTIDASE COMPLEX-LIKE PROTEIN DTM1"/>
    <property type="match status" value="1"/>
</dbReference>
<dbReference type="PANTHER" id="PTHR38354:SF2">
    <property type="entry name" value="SIGNAL PEPTIDASE COMPLEX-LIKE PROTEIN DTM1"/>
    <property type="match status" value="1"/>
</dbReference>
<dbReference type="Pfam" id="PF06645">
    <property type="entry name" value="SPC12"/>
    <property type="match status" value="1"/>
</dbReference>
<gene>
    <name evidence="3" type="primary">DTM1</name>
    <name evidence="6" type="ordered locus">Os07g0622900</name>
    <name evidence="4" type="ordered locus">LOC_Os07g43010</name>
    <name evidence="5" type="ORF">P0524E08.106</name>
</gene>
<feature type="signal peptide" evidence="1">
    <location>
        <begin position="1"/>
        <end position="25"/>
    </location>
</feature>
<feature type="chain" id="PRO_0000436458" description="Signal peptidase complex-like protein DTM1">
    <location>
        <begin position="26"/>
        <end position="112"/>
    </location>
</feature>
<feature type="transmembrane region" description="Helical" evidence="1">
    <location>
        <begin position="33"/>
        <end position="53"/>
    </location>
</feature>
<feature type="transmembrane region" description="Helical" evidence="1">
    <location>
        <begin position="92"/>
        <end position="112"/>
    </location>
</feature>
<comment type="function">
    <text evidence="2">Functions in tapetum development during early meiosis. May play a role in the endoplasmic reticulum (ER) membrane in the early stages of tapetum development in anthers. Seems to function after MSP1 and before UDT1.</text>
</comment>
<comment type="subcellular location">
    <subcellularLocation>
        <location evidence="2">Endoplasmic reticulum membrane</location>
        <topology evidence="1">Multi-pass membrane protein</topology>
    </subcellularLocation>
</comment>
<comment type="developmental stage">
    <text evidence="2">During anther development highly expressed in tapetal cells at stages 6 and 7, and at lower levels in the pollen mother cells and meiocytes.</text>
</comment>
<comment type="disruption phenotype">
    <text evidence="2">Male sterility due to abnormal formation of the tapetum and development of pollen mother cells arrested at the early stages of meiotic prophase I.</text>
</comment>
<comment type="similarity">
    <text evidence="4">Belongs to the SPCS1 family.</text>
</comment>
<evidence type="ECO:0000255" key="1"/>
<evidence type="ECO:0000269" key="2">
    <source>
    </source>
</evidence>
<evidence type="ECO:0000303" key="3">
    <source>
    </source>
</evidence>
<evidence type="ECO:0000305" key="4"/>
<evidence type="ECO:0000312" key="5">
    <source>
        <dbReference type="EMBL" id="BAC79906.1"/>
    </source>
</evidence>
<evidence type="ECO:0000312" key="6">
    <source>
        <dbReference type="EMBL" id="BAF22232.1"/>
    </source>
</evidence>
<sequence>MGRDEMLRRSLVALAAAVVVTGVVTASVRKAAATYGFGILAIAGVLLPDWEFFDRDYSQWLTPMPASRRTAAEAAADREHDVWKFKPYPLRMAMLTTIYGFGLYKWWMYVSS</sequence>
<reference key="1">
    <citation type="journal article" date="2005" name="Nature">
        <title>The map-based sequence of the rice genome.</title>
        <authorList>
            <consortium name="International rice genome sequencing project (IRGSP)"/>
        </authorList>
    </citation>
    <scope>NUCLEOTIDE SEQUENCE [LARGE SCALE GENOMIC DNA]</scope>
    <source>
        <strain>cv. Nipponbare</strain>
    </source>
</reference>
<reference key="2">
    <citation type="journal article" date="2008" name="Nucleic Acids Res.">
        <title>The rice annotation project database (RAP-DB): 2008 update.</title>
        <authorList>
            <consortium name="The rice annotation project (RAP)"/>
        </authorList>
    </citation>
    <scope>GENOME REANNOTATION</scope>
    <source>
        <strain>cv. Nipponbare</strain>
    </source>
</reference>
<reference key="3">
    <citation type="journal article" date="2013" name="Rice">
        <title>Improvement of the Oryza sativa Nipponbare reference genome using next generation sequence and optical map data.</title>
        <authorList>
            <person name="Kawahara Y."/>
            <person name="de la Bastide M."/>
            <person name="Hamilton J.P."/>
            <person name="Kanamori H."/>
            <person name="McCombie W.R."/>
            <person name="Ouyang S."/>
            <person name="Schwartz D.C."/>
            <person name="Tanaka T."/>
            <person name="Wu J."/>
            <person name="Zhou S."/>
            <person name="Childs K.L."/>
            <person name="Davidson R.M."/>
            <person name="Lin H."/>
            <person name="Quesada-Ocampo L."/>
            <person name="Vaillancourt B."/>
            <person name="Sakai H."/>
            <person name="Lee S.S."/>
            <person name="Kim J."/>
            <person name="Numa H."/>
            <person name="Itoh T."/>
            <person name="Buell C.R."/>
            <person name="Matsumoto T."/>
        </authorList>
    </citation>
    <scope>GENOME REANNOTATION</scope>
    <source>
        <strain>cv. Nipponbare</strain>
    </source>
</reference>
<reference key="4">
    <citation type="journal article" date="2003" name="Science">
        <title>Collection, mapping, and annotation of over 28,000 cDNA clones from japonica rice.</title>
        <authorList>
            <consortium name="The rice full-length cDNA consortium"/>
        </authorList>
    </citation>
    <scope>NUCLEOTIDE SEQUENCE [LARGE SCALE MRNA]</scope>
    <source>
        <strain>cv. Nipponbare</strain>
    </source>
</reference>
<reference key="5">
    <citation type="journal article" date="2012" name="Plant J.">
        <title>The rice gene DEFECTIVE TAPETUM AND MEIOCYTES 1 (DTM1) is required for early tapetum development and meiosis.</title>
        <authorList>
            <person name="Yi J."/>
            <person name="Kim S.R."/>
            <person name="Lee D.Y."/>
            <person name="Moon S."/>
            <person name="Lee Y.S."/>
            <person name="Jung K.H."/>
            <person name="Hwang I."/>
            <person name="An G."/>
        </authorList>
    </citation>
    <scope>FUNCTION</scope>
    <scope>SUBCELLULAR LOCATION</scope>
    <scope>DEVELOPMENTAL STAGE</scope>
    <scope>DISRUPTION PHENOTYPE</scope>
</reference>